<organism>
    <name type="scientific">Enterococcus faecalis (strain ATCC 700802 / V583)</name>
    <dbReference type="NCBI Taxonomy" id="226185"/>
    <lineage>
        <taxon>Bacteria</taxon>
        <taxon>Bacillati</taxon>
        <taxon>Bacillota</taxon>
        <taxon>Bacilli</taxon>
        <taxon>Lactobacillales</taxon>
        <taxon>Enterococcaceae</taxon>
        <taxon>Enterococcus</taxon>
    </lineage>
</organism>
<comment type="function">
    <text evidence="1">Transfers and isomerizes the ribose moiety from AdoMet to the 7-aminomethyl group of 7-deazaguanine (preQ1-tRNA) to give epoxyqueuosine (oQ-tRNA).</text>
</comment>
<comment type="catalytic activity">
    <reaction evidence="1">
        <text>7-aminomethyl-7-carbaguanosine(34) in tRNA + S-adenosyl-L-methionine = epoxyqueuosine(34) in tRNA + adenine + L-methionine + 2 H(+)</text>
        <dbReference type="Rhea" id="RHEA:32155"/>
        <dbReference type="Rhea" id="RHEA-COMP:10342"/>
        <dbReference type="Rhea" id="RHEA-COMP:18582"/>
        <dbReference type="ChEBI" id="CHEBI:15378"/>
        <dbReference type="ChEBI" id="CHEBI:16708"/>
        <dbReference type="ChEBI" id="CHEBI:57844"/>
        <dbReference type="ChEBI" id="CHEBI:59789"/>
        <dbReference type="ChEBI" id="CHEBI:82833"/>
        <dbReference type="ChEBI" id="CHEBI:194443"/>
        <dbReference type="EC" id="2.4.99.17"/>
    </reaction>
</comment>
<comment type="pathway">
    <text evidence="1">tRNA modification; tRNA-queuosine biosynthesis.</text>
</comment>
<comment type="subunit">
    <text evidence="1">Monomer.</text>
</comment>
<comment type="subcellular location">
    <subcellularLocation>
        <location evidence="1">Cytoplasm</location>
    </subcellularLocation>
</comment>
<comment type="similarity">
    <text evidence="1">Belongs to the QueA family.</text>
</comment>
<feature type="chain" id="PRO_0000165403" description="S-adenosylmethionine:tRNA ribosyltransferase-isomerase">
    <location>
        <begin position="1"/>
        <end position="343"/>
    </location>
</feature>
<reference key="1">
    <citation type="journal article" date="2003" name="Science">
        <title>Role of mobile DNA in the evolution of vancomycin-resistant Enterococcus faecalis.</title>
        <authorList>
            <person name="Paulsen I.T."/>
            <person name="Banerjei L."/>
            <person name="Myers G.S.A."/>
            <person name="Nelson K.E."/>
            <person name="Seshadri R."/>
            <person name="Read T.D."/>
            <person name="Fouts D.E."/>
            <person name="Eisen J.A."/>
            <person name="Gill S.R."/>
            <person name="Heidelberg J.F."/>
            <person name="Tettelin H."/>
            <person name="Dodson R.J."/>
            <person name="Umayam L.A."/>
            <person name="Brinkac L.M."/>
            <person name="Beanan M.J."/>
            <person name="Daugherty S.C."/>
            <person name="DeBoy R.T."/>
            <person name="Durkin S.A."/>
            <person name="Kolonay J.F."/>
            <person name="Madupu R."/>
            <person name="Nelson W.C."/>
            <person name="Vamathevan J.J."/>
            <person name="Tran B."/>
            <person name="Upton J."/>
            <person name="Hansen T."/>
            <person name="Shetty J."/>
            <person name="Khouri H.M."/>
            <person name="Utterback T.R."/>
            <person name="Radune D."/>
            <person name="Ketchum K.A."/>
            <person name="Dougherty B.A."/>
            <person name="Fraser C.M."/>
        </authorList>
    </citation>
    <scope>NUCLEOTIDE SEQUENCE [LARGE SCALE GENOMIC DNA]</scope>
    <source>
        <strain>ATCC 700802 / V583</strain>
    </source>
</reference>
<dbReference type="EC" id="2.4.99.17" evidence="1"/>
<dbReference type="EMBL" id="AE016830">
    <property type="protein sequence ID" value="AAO80679.1"/>
    <property type="molecule type" value="Genomic_DNA"/>
</dbReference>
<dbReference type="RefSeq" id="NP_814609.1">
    <property type="nucleotide sequence ID" value="NC_004668.1"/>
</dbReference>
<dbReference type="RefSeq" id="WP_002355747.1">
    <property type="nucleotide sequence ID" value="NZ_KE136527.1"/>
</dbReference>
<dbReference type="SMR" id="Q837H2"/>
<dbReference type="STRING" id="226185.EF_0868"/>
<dbReference type="EnsemblBacteria" id="AAO80679">
    <property type="protein sequence ID" value="AAO80679"/>
    <property type="gene ID" value="EF_0868"/>
</dbReference>
<dbReference type="GeneID" id="60893209"/>
<dbReference type="KEGG" id="efa:EF0868"/>
<dbReference type="PATRIC" id="fig|226185.45.peg.3078"/>
<dbReference type="eggNOG" id="COG0809">
    <property type="taxonomic scope" value="Bacteria"/>
</dbReference>
<dbReference type="HOGENOM" id="CLU_039110_1_0_9"/>
<dbReference type="UniPathway" id="UPA00392"/>
<dbReference type="Proteomes" id="UP000001415">
    <property type="component" value="Chromosome"/>
</dbReference>
<dbReference type="GO" id="GO:0005737">
    <property type="term" value="C:cytoplasm"/>
    <property type="evidence" value="ECO:0007669"/>
    <property type="project" value="UniProtKB-SubCell"/>
</dbReference>
<dbReference type="GO" id="GO:0051075">
    <property type="term" value="F:S-adenosylmethionine:tRNA ribosyltransferase-isomerase activity"/>
    <property type="evidence" value="ECO:0007669"/>
    <property type="project" value="UniProtKB-EC"/>
</dbReference>
<dbReference type="GO" id="GO:0008616">
    <property type="term" value="P:queuosine biosynthetic process"/>
    <property type="evidence" value="ECO:0007669"/>
    <property type="project" value="UniProtKB-UniRule"/>
</dbReference>
<dbReference type="GO" id="GO:0002099">
    <property type="term" value="P:tRNA wobble guanine modification"/>
    <property type="evidence" value="ECO:0007669"/>
    <property type="project" value="TreeGrafter"/>
</dbReference>
<dbReference type="FunFam" id="2.40.10.240:FF:000002">
    <property type="entry name" value="S-adenosylmethionine:tRNA ribosyltransferase-isomerase"/>
    <property type="match status" value="1"/>
</dbReference>
<dbReference type="FunFam" id="3.40.1780.10:FF:000001">
    <property type="entry name" value="S-adenosylmethionine:tRNA ribosyltransferase-isomerase"/>
    <property type="match status" value="1"/>
</dbReference>
<dbReference type="Gene3D" id="2.40.10.240">
    <property type="entry name" value="QueA-like"/>
    <property type="match status" value="1"/>
</dbReference>
<dbReference type="Gene3D" id="3.40.1780.10">
    <property type="entry name" value="QueA-like"/>
    <property type="match status" value="1"/>
</dbReference>
<dbReference type="HAMAP" id="MF_00113">
    <property type="entry name" value="QueA"/>
    <property type="match status" value="1"/>
</dbReference>
<dbReference type="InterPro" id="IPR003699">
    <property type="entry name" value="QueA"/>
</dbReference>
<dbReference type="InterPro" id="IPR042118">
    <property type="entry name" value="QueA_dom1"/>
</dbReference>
<dbReference type="InterPro" id="IPR042119">
    <property type="entry name" value="QueA_dom2"/>
</dbReference>
<dbReference type="InterPro" id="IPR036100">
    <property type="entry name" value="QueA_sf"/>
</dbReference>
<dbReference type="NCBIfam" id="NF001140">
    <property type="entry name" value="PRK00147.1"/>
    <property type="match status" value="1"/>
</dbReference>
<dbReference type="NCBIfam" id="TIGR00113">
    <property type="entry name" value="queA"/>
    <property type="match status" value="1"/>
</dbReference>
<dbReference type="PANTHER" id="PTHR30307">
    <property type="entry name" value="S-ADENOSYLMETHIONINE:TRNA RIBOSYLTRANSFERASE-ISOMERASE"/>
    <property type="match status" value="1"/>
</dbReference>
<dbReference type="PANTHER" id="PTHR30307:SF0">
    <property type="entry name" value="S-ADENOSYLMETHIONINE:TRNA RIBOSYLTRANSFERASE-ISOMERASE"/>
    <property type="match status" value="1"/>
</dbReference>
<dbReference type="Pfam" id="PF02547">
    <property type="entry name" value="Queuosine_synth"/>
    <property type="match status" value="1"/>
</dbReference>
<dbReference type="SUPFAM" id="SSF111337">
    <property type="entry name" value="QueA-like"/>
    <property type="match status" value="1"/>
</dbReference>
<name>QUEA_ENTFA</name>
<proteinExistence type="inferred from homology"/>
<sequence>MLSTEDFDFDLPEELIAQTPLKDRASSRLLVVNKETGDMEDKHFHDILDELQPGDALVMNNTRVLPARLYGEKPETGGHLEVLLLTNTEGDTWETLIKPAKRAKVGTEIQFGDGRLKAVVKEELEHGGRIIEFKYDGIFLEILESLGEMPLPPYIKERLDDPDRYQTVYAEENGSAAAPTAGLHFTKELLEEIKAKGVHLVYLTLHVGLGTFRPVSVDNIEEHHMHSEFYRLTEEAAKQLNEVRQAGGRIVAVGTTSIRTLETIGTKFNGEIQADSGWTDIFITPGYQFKVVEAFSTNFHLPKSTLVMLVSAFAGKDLTLAAYQHAIEEKYRFFSFGDAMFIK</sequence>
<protein>
    <recommendedName>
        <fullName evidence="1">S-adenosylmethionine:tRNA ribosyltransferase-isomerase</fullName>
        <ecNumber evidence="1">2.4.99.17</ecNumber>
    </recommendedName>
    <alternativeName>
        <fullName evidence="1">Queuosine biosynthesis protein QueA</fullName>
    </alternativeName>
</protein>
<evidence type="ECO:0000255" key="1">
    <source>
        <dbReference type="HAMAP-Rule" id="MF_00113"/>
    </source>
</evidence>
<accession>Q837H2</accession>
<gene>
    <name evidence="1" type="primary">queA</name>
    <name type="ordered locus">EF_0868</name>
</gene>
<keyword id="KW-0963">Cytoplasm</keyword>
<keyword id="KW-0671">Queuosine biosynthesis</keyword>
<keyword id="KW-1185">Reference proteome</keyword>
<keyword id="KW-0949">S-adenosyl-L-methionine</keyword>
<keyword id="KW-0808">Transferase</keyword>